<dbReference type="EC" id="6.3.4.2" evidence="1 2"/>
<dbReference type="EMBL" id="AP008226">
    <property type="protein sequence ID" value="BAD71289.1"/>
    <property type="molecule type" value="Genomic_DNA"/>
</dbReference>
<dbReference type="RefSeq" id="WP_011228700.1">
    <property type="nucleotide sequence ID" value="NC_006461.1"/>
</dbReference>
<dbReference type="RefSeq" id="YP_144732.1">
    <property type="nucleotide sequence ID" value="NC_006461.1"/>
</dbReference>
<dbReference type="PDB" id="1VCM">
    <property type="method" value="X-ray"/>
    <property type="resolution" value="2.35 A"/>
    <property type="chains" value="A=1-550"/>
</dbReference>
<dbReference type="PDB" id="1VCN">
    <property type="method" value="X-ray"/>
    <property type="resolution" value="2.25 A"/>
    <property type="chains" value="A=1-550"/>
</dbReference>
<dbReference type="PDB" id="1VCO">
    <property type="method" value="X-ray"/>
    <property type="resolution" value="2.15 A"/>
    <property type="chains" value="A=1-550"/>
</dbReference>
<dbReference type="PDBsum" id="1VCM"/>
<dbReference type="PDBsum" id="1VCN"/>
<dbReference type="PDBsum" id="1VCO"/>
<dbReference type="SMR" id="Q5SIA8"/>
<dbReference type="MEROPS" id="C26.964"/>
<dbReference type="EnsemblBacteria" id="BAD71289">
    <property type="protein sequence ID" value="BAD71289"/>
    <property type="gene ID" value="BAD71289"/>
</dbReference>
<dbReference type="GeneID" id="3169502"/>
<dbReference type="KEGG" id="ttj:TTHA1466"/>
<dbReference type="PATRIC" id="fig|300852.9.peg.1440"/>
<dbReference type="eggNOG" id="COG0504">
    <property type="taxonomic scope" value="Bacteria"/>
</dbReference>
<dbReference type="HOGENOM" id="CLU_011675_5_0_0"/>
<dbReference type="PhylomeDB" id="Q5SIA8"/>
<dbReference type="BRENDA" id="6.3.4.2">
    <property type="organism ID" value="7852"/>
</dbReference>
<dbReference type="UniPathway" id="UPA00159">
    <property type="reaction ID" value="UER00277"/>
</dbReference>
<dbReference type="EvolutionaryTrace" id="Q5SIA8"/>
<dbReference type="Proteomes" id="UP000000532">
    <property type="component" value="Chromosome"/>
</dbReference>
<dbReference type="GO" id="GO:0005829">
    <property type="term" value="C:cytosol"/>
    <property type="evidence" value="ECO:0007669"/>
    <property type="project" value="TreeGrafter"/>
</dbReference>
<dbReference type="GO" id="GO:0005524">
    <property type="term" value="F:ATP binding"/>
    <property type="evidence" value="ECO:0007669"/>
    <property type="project" value="UniProtKB-KW"/>
</dbReference>
<dbReference type="GO" id="GO:0003883">
    <property type="term" value="F:CTP synthase activity"/>
    <property type="evidence" value="ECO:0007669"/>
    <property type="project" value="UniProtKB-UniRule"/>
</dbReference>
<dbReference type="GO" id="GO:0004359">
    <property type="term" value="F:glutaminase activity"/>
    <property type="evidence" value="ECO:0007669"/>
    <property type="project" value="RHEA"/>
</dbReference>
<dbReference type="GO" id="GO:0042802">
    <property type="term" value="F:identical protein binding"/>
    <property type="evidence" value="ECO:0007669"/>
    <property type="project" value="TreeGrafter"/>
</dbReference>
<dbReference type="GO" id="GO:0046872">
    <property type="term" value="F:metal ion binding"/>
    <property type="evidence" value="ECO:0007669"/>
    <property type="project" value="UniProtKB-KW"/>
</dbReference>
<dbReference type="GO" id="GO:0044210">
    <property type="term" value="P:'de novo' CTP biosynthetic process"/>
    <property type="evidence" value="ECO:0007669"/>
    <property type="project" value="UniProtKB-UniRule"/>
</dbReference>
<dbReference type="GO" id="GO:0019856">
    <property type="term" value="P:pyrimidine nucleobase biosynthetic process"/>
    <property type="evidence" value="ECO:0007669"/>
    <property type="project" value="TreeGrafter"/>
</dbReference>
<dbReference type="CDD" id="cd03113">
    <property type="entry name" value="CTPS_N"/>
    <property type="match status" value="1"/>
</dbReference>
<dbReference type="CDD" id="cd01746">
    <property type="entry name" value="GATase1_CTP_Synthase"/>
    <property type="match status" value="1"/>
</dbReference>
<dbReference type="FunFam" id="3.40.50.300:FF:000009">
    <property type="entry name" value="CTP synthase"/>
    <property type="match status" value="1"/>
</dbReference>
<dbReference type="FunFam" id="3.40.50.880:FF:000002">
    <property type="entry name" value="CTP synthase"/>
    <property type="match status" value="1"/>
</dbReference>
<dbReference type="Gene3D" id="3.40.50.880">
    <property type="match status" value="1"/>
</dbReference>
<dbReference type="Gene3D" id="3.40.50.300">
    <property type="entry name" value="P-loop containing nucleotide triphosphate hydrolases"/>
    <property type="match status" value="1"/>
</dbReference>
<dbReference type="HAMAP" id="MF_01227">
    <property type="entry name" value="PyrG"/>
    <property type="match status" value="1"/>
</dbReference>
<dbReference type="InterPro" id="IPR029062">
    <property type="entry name" value="Class_I_gatase-like"/>
</dbReference>
<dbReference type="InterPro" id="IPR004468">
    <property type="entry name" value="CTP_synthase"/>
</dbReference>
<dbReference type="InterPro" id="IPR017456">
    <property type="entry name" value="CTP_synthase_N"/>
</dbReference>
<dbReference type="InterPro" id="IPR017926">
    <property type="entry name" value="GATASE"/>
</dbReference>
<dbReference type="InterPro" id="IPR033828">
    <property type="entry name" value="GATase1_CTP_Synthase"/>
</dbReference>
<dbReference type="InterPro" id="IPR027417">
    <property type="entry name" value="P-loop_NTPase"/>
</dbReference>
<dbReference type="NCBIfam" id="NF003792">
    <property type="entry name" value="PRK05380.1"/>
    <property type="match status" value="1"/>
</dbReference>
<dbReference type="NCBIfam" id="TIGR00337">
    <property type="entry name" value="PyrG"/>
    <property type="match status" value="1"/>
</dbReference>
<dbReference type="PANTHER" id="PTHR11550">
    <property type="entry name" value="CTP SYNTHASE"/>
    <property type="match status" value="1"/>
</dbReference>
<dbReference type="PANTHER" id="PTHR11550:SF0">
    <property type="entry name" value="CTP SYNTHASE-RELATED"/>
    <property type="match status" value="1"/>
</dbReference>
<dbReference type="Pfam" id="PF06418">
    <property type="entry name" value="CTP_synth_N"/>
    <property type="match status" value="1"/>
</dbReference>
<dbReference type="Pfam" id="PF00117">
    <property type="entry name" value="GATase"/>
    <property type="match status" value="1"/>
</dbReference>
<dbReference type="SUPFAM" id="SSF52317">
    <property type="entry name" value="Class I glutamine amidotransferase-like"/>
    <property type="match status" value="1"/>
</dbReference>
<dbReference type="SUPFAM" id="SSF52540">
    <property type="entry name" value="P-loop containing nucleoside triphosphate hydrolases"/>
    <property type="match status" value="1"/>
</dbReference>
<dbReference type="PROSITE" id="PS51273">
    <property type="entry name" value="GATASE_TYPE_1"/>
    <property type="match status" value="1"/>
</dbReference>
<evidence type="ECO:0000255" key="1">
    <source>
        <dbReference type="HAMAP-Rule" id="MF_01227"/>
    </source>
</evidence>
<evidence type="ECO:0000269" key="2">
    <source>
    </source>
</evidence>
<evidence type="ECO:0000303" key="3">
    <source>
    </source>
</evidence>
<evidence type="ECO:0000305" key="4">
    <source>
    </source>
</evidence>
<evidence type="ECO:0007744" key="5">
    <source>
        <dbReference type="PDB" id="1VCO"/>
    </source>
</evidence>
<evidence type="ECO:0007829" key="6">
    <source>
        <dbReference type="PDB" id="1VCM"/>
    </source>
</evidence>
<evidence type="ECO:0007829" key="7">
    <source>
        <dbReference type="PDB" id="1VCN"/>
    </source>
</evidence>
<evidence type="ECO:0007829" key="8">
    <source>
        <dbReference type="PDB" id="1VCO"/>
    </source>
</evidence>
<proteinExistence type="evidence at protein level"/>
<accession>Q5SIA8</accession>
<sequence length="550" mass="61003">MNGSADAGPRPRKYVFITGGVVSSLGKGILTSSLGALLRARGYRVTAIKIDPYVNVDAGTMRPYEHGEVFVTADGAETDLDIGHYERFLDMDLSRGNNLTTGQVYLSVIQKERRGEYLSQTVQVIPHITDEIKERIRKVAEEQKAEIVVVEVGGTVGDIESLPFLEAIRQFRFDEGEGNTLYLHLTLVPYLETSEEFKTKPTQHSVATLRGVGIQPDILVLRSARPVPEEVRRKVALFTNVRPGHVFSSPTVEHLYEVPLLLEEQGLGRAVERALGLEAVIPNLSFWQEAVRVLKHPERTVKIAIAGKYVKMPDAYLSLLEALRHAGIKNRARVEVKWVDAESLEAADLDEAFRDVSGILVPGGFGVRGIEGKVRAAQYARERKIPYLGICLGLQIAVIEFARNVAGLKGANSTEFDPHTPHPVIDLMPEQLEVEGLGGTMRLGDWPMRIKPGTLLHRLYGKEEVLERHRHRYEVNPLYVDGLERAGLVVSATTPGMRGRGAGLVEAIELKDHPFFLGLQSHPEFKSRPMRPSPPFVGFVEAALAYQERA</sequence>
<gene>
    <name evidence="1" type="primary">pyrG</name>
    <name type="ordered locus">TTHA1466</name>
</gene>
<comment type="function">
    <text evidence="1 2">Catalyzes the ATP-dependent amination of UTP to CTP with either L-glutamine or ammonia as the source of nitrogen (PubMed:15296735). Regulates intracellular CTP levels through interactions with the four ribonucleotide triphosphates (By similarity).</text>
</comment>
<comment type="catalytic activity">
    <reaction evidence="1 2">
        <text>UTP + L-glutamine + ATP + H2O = CTP + L-glutamate + ADP + phosphate + 2 H(+)</text>
        <dbReference type="Rhea" id="RHEA:26426"/>
        <dbReference type="ChEBI" id="CHEBI:15377"/>
        <dbReference type="ChEBI" id="CHEBI:15378"/>
        <dbReference type="ChEBI" id="CHEBI:29985"/>
        <dbReference type="ChEBI" id="CHEBI:30616"/>
        <dbReference type="ChEBI" id="CHEBI:37563"/>
        <dbReference type="ChEBI" id="CHEBI:43474"/>
        <dbReference type="ChEBI" id="CHEBI:46398"/>
        <dbReference type="ChEBI" id="CHEBI:58359"/>
        <dbReference type="ChEBI" id="CHEBI:456216"/>
        <dbReference type="EC" id="6.3.4.2"/>
    </reaction>
</comment>
<comment type="catalytic activity">
    <reaction evidence="1 4">
        <text>L-glutamine + H2O = L-glutamate + NH4(+)</text>
        <dbReference type="Rhea" id="RHEA:15889"/>
        <dbReference type="ChEBI" id="CHEBI:15377"/>
        <dbReference type="ChEBI" id="CHEBI:28938"/>
        <dbReference type="ChEBI" id="CHEBI:29985"/>
        <dbReference type="ChEBI" id="CHEBI:58359"/>
    </reaction>
</comment>
<comment type="catalytic activity">
    <reaction evidence="1 4">
        <text>UTP + NH4(+) + ATP = CTP + ADP + phosphate + 2 H(+)</text>
        <dbReference type="Rhea" id="RHEA:16597"/>
        <dbReference type="ChEBI" id="CHEBI:15378"/>
        <dbReference type="ChEBI" id="CHEBI:28938"/>
        <dbReference type="ChEBI" id="CHEBI:30616"/>
        <dbReference type="ChEBI" id="CHEBI:37563"/>
        <dbReference type="ChEBI" id="CHEBI:43474"/>
        <dbReference type="ChEBI" id="CHEBI:46398"/>
        <dbReference type="ChEBI" id="CHEBI:456216"/>
    </reaction>
</comment>
<comment type="activity regulation">
    <text evidence="1 2">Allosterically activated by GTP, when glutamine is the substrate (PubMed:15296735). GTP has no effect on the reaction when ammonia is the substrate. The allosteric effector GTP functions by stabilizing the protein conformation that binds the tetrahedral intermediate(s) formed during glutamine hydrolysis. Inhibited by the product CTP, via allosteric rather than competitive inhibition (By similarity).</text>
</comment>
<comment type="biophysicochemical properties">
    <kinetics>
        <KM evidence="2">0.24 mM for L-glutamine (at unsaturating levels of ATP and UTP (0.5 mM))</KM>
        <KM evidence="2">0.22 mM for L-glutamine (in the presence of GTP)</KM>
        <KM evidence="2">0.37 mM for UTP</KM>
        <text evidence="2">kcat is 7.4 sec(-1) toward L-glutamine at unsaturating levels of ATP and UTP (0.5 mM) and 40 sec(-1) in the presence of GTP. kcat is 260 sec(-1) toward UTP.</text>
    </kinetics>
</comment>
<comment type="pathway">
    <text evidence="1">Pyrimidine metabolism; CTP biosynthesis via de novo pathway; CTP from UDP: step 2/2.</text>
</comment>
<comment type="subunit">
    <text evidence="2">Homotetramer in the presence of UTP and ATP. Is in a protein concentration-dependent equilibrium between monomer, dimer, and tetramer in the absence of UTP and ATP.</text>
</comment>
<comment type="miscellaneous">
    <text evidence="1">CTPSs have evolved a hybrid strategy for distinguishing between UTP and CTP. The overlapping regions of the product feedback inhibitory and substrate sites recognize a common feature in both compounds, the triphosphate moiety. To differentiate isosteric substrate and product pyrimidine rings, an additional pocket far from the expected kinase/ligase catalytic site, specifically recognizes the cytosine and ribose portions of the product inhibitor.</text>
</comment>
<comment type="similarity">
    <text evidence="1">Belongs to the CTP synthase family.</text>
</comment>
<protein>
    <recommendedName>
        <fullName evidence="1">CTP synthase</fullName>
        <ecNumber evidence="1 2">6.3.4.2</ecNumber>
    </recommendedName>
    <alternativeName>
        <fullName evidence="1">Cytidine 5'-triphosphate synthase</fullName>
    </alternativeName>
    <alternativeName>
        <fullName evidence="1">Cytidine triphosphate synthetase</fullName>
        <shortName evidence="1 3">CTP synthetase</shortName>
        <shortName evidence="1">CTPS</shortName>
    </alternativeName>
    <alternativeName>
        <fullName evidence="1">UTP--ammonia ligase</fullName>
    </alternativeName>
</protein>
<keyword id="KW-0002">3D-structure</keyword>
<keyword id="KW-0067">ATP-binding</keyword>
<keyword id="KW-0315">Glutamine amidotransferase</keyword>
<keyword id="KW-0436">Ligase</keyword>
<keyword id="KW-0460">Magnesium</keyword>
<keyword id="KW-0479">Metal-binding</keyword>
<keyword id="KW-0547">Nucleotide-binding</keyword>
<keyword id="KW-0665">Pyrimidine biosynthesis</keyword>
<keyword id="KW-1185">Reference proteome</keyword>
<organism>
    <name type="scientific">Thermus thermophilus (strain ATCC 27634 / DSM 579 / HB8)</name>
    <dbReference type="NCBI Taxonomy" id="300852"/>
    <lineage>
        <taxon>Bacteria</taxon>
        <taxon>Thermotogati</taxon>
        <taxon>Deinococcota</taxon>
        <taxon>Deinococci</taxon>
        <taxon>Thermales</taxon>
        <taxon>Thermaceae</taxon>
        <taxon>Thermus</taxon>
    </lineage>
</organism>
<name>PYRG_THET8</name>
<reference key="1">
    <citation type="submission" date="2004-11" db="EMBL/GenBank/DDBJ databases">
        <title>Complete genome sequence of Thermus thermophilus HB8.</title>
        <authorList>
            <person name="Masui R."/>
            <person name="Kurokawa K."/>
            <person name="Nakagawa N."/>
            <person name="Tokunaga F."/>
            <person name="Koyama Y."/>
            <person name="Shibata T."/>
            <person name="Oshima T."/>
            <person name="Yokoyama S."/>
            <person name="Yasunaga T."/>
            <person name="Kuramitsu S."/>
        </authorList>
    </citation>
    <scope>NUCLEOTIDE SEQUENCE [LARGE SCALE GENOMIC DNA]</scope>
    <source>
        <strain>ATCC 27634 / DSM 579 / HB8</strain>
    </source>
</reference>
<reference key="2">
    <citation type="journal article" date="2004" name="Structure">
        <title>Crystal structures of CTP synthetase reveal ATP, UTP, and glutamine binding sites.</title>
        <authorList>
            <person name="Goto M."/>
            <person name="Omi R."/>
            <person name="Nakagawa N."/>
            <person name="Miyahara I."/>
            <person name="Hirotsu K."/>
        </authorList>
    </citation>
    <scope>X-RAY CRYSTALLOGRAPHY (2.15 ANGSTROMS) OF APOENZYME AND IN COMPLEX WITH L-GLUTAMINE</scope>
    <scope>FUNCTION</scope>
    <scope>CATALYTIC ACTIVITY</scope>
    <scope>BIOPHYSICOCHEMICAL PROPERTIES</scope>
    <scope>SUBUNIT</scope>
    <source>
        <strain>ATCC 27634 / DSM 579 / HB8</strain>
    </source>
</reference>
<feature type="chain" id="PRO_0000266251" description="CTP synthase">
    <location>
        <begin position="1"/>
        <end position="550"/>
    </location>
</feature>
<feature type="domain" description="Glutamine amidotransferase type-1" evidence="1">
    <location>
        <begin position="302"/>
        <end position="549"/>
    </location>
</feature>
<feature type="region of interest" description="Amidoligase domain" evidence="1">
    <location>
        <begin position="1"/>
        <end position="277"/>
    </location>
</feature>
<feature type="active site" description="Nucleophile; for glutamine hydrolysis" evidence="1 4">
    <location>
        <position position="391"/>
    </location>
</feature>
<feature type="active site" evidence="1 4">
    <location>
        <position position="522"/>
    </location>
</feature>
<feature type="active site" evidence="1 4">
    <location>
        <position position="524"/>
    </location>
</feature>
<feature type="binding site" evidence="1">
    <location>
        <position position="23"/>
    </location>
    <ligand>
        <name>CTP</name>
        <dbReference type="ChEBI" id="CHEBI:37563"/>
        <note>allosteric inhibitor</note>
    </ligand>
</feature>
<feature type="binding site" evidence="1">
    <location>
        <position position="23"/>
    </location>
    <ligand>
        <name>UTP</name>
        <dbReference type="ChEBI" id="CHEBI:46398"/>
    </ligand>
</feature>
<feature type="binding site" evidence="1">
    <location>
        <begin position="24"/>
        <end position="29"/>
    </location>
    <ligand>
        <name>ATP</name>
        <dbReference type="ChEBI" id="CHEBI:30616"/>
    </ligand>
</feature>
<feature type="binding site" evidence="2 5">
    <location>
        <position position="64"/>
    </location>
    <ligand>
        <name>L-glutamine</name>
        <dbReference type="ChEBI" id="CHEBI:58359"/>
    </ligand>
</feature>
<feature type="binding site" evidence="1">
    <location>
        <position position="81"/>
    </location>
    <ligand>
        <name>ATP</name>
        <dbReference type="ChEBI" id="CHEBI:30616"/>
    </ligand>
</feature>
<feature type="binding site" evidence="1">
    <location>
        <position position="81"/>
    </location>
    <ligand>
        <name>Mg(2+)</name>
        <dbReference type="ChEBI" id="CHEBI:18420"/>
    </ligand>
</feature>
<feature type="binding site" evidence="1">
    <location>
        <position position="151"/>
    </location>
    <ligand>
        <name>Mg(2+)</name>
        <dbReference type="ChEBI" id="CHEBI:18420"/>
    </ligand>
</feature>
<feature type="binding site" evidence="1">
    <location>
        <begin position="158"/>
        <end position="160"/>
    </location>
    <ligand>
        <name>CTP</name>
        <dbReference type="ChEBI" id="CHEBI:37563"/>
        <note>allosteric inhibitor</note>
    </ligand>
</feature>
<feature type="binding site" evidence="1">
    <location>
        <begin position="198"/>
        <end position="203"/>
    </location>
    <ligand>
        <name>CTP</name>
        <dbReference type="ChEBI" id="CHEBI:37563"/>
        <note>allosteric inhibitor</note>
    </ligand>
</feature>
<feature type="binding site" evidence="1">
    <location>
        <begin position="198"/>
        <end position="203"/>
    </location>
    <ligand>
        <name>UTP</name>
        <dbReference type="ChEBI" id="CHEBI:46398"/>
    </ligand>
</feature>
<feature type="binding site" evidence="1">
    <location>
        <position position="234"/>
    </location>
    <ligand>
        <name>CTP</name>
        <dbReference type="ChEBI" id="CHEBI:37563"/>
        <note>allosteric inhibitor</note>
    </ligand>
</feature>
<feature type="binding site" evidence="1">
    <location>
        <position position="234"/>
    </location>
    <ligand>
        <name>UTP</name>
        <dbReference type="ChEBI" id="CHEBI:46398"/>
    </ligand>
</feature>
<feature type="binding site" evidence="1">
    <location>
        <position position="252"/>
    </location>
    <ligand>
        <name>ATP</name>
        <dbReference type="ChEBI" id="CHEBI:30616"/>
    </ligand>
</feature>
<feature type="binding site" evidence="2 5">
    <location>
        <position position="364"/>
    </location>
    <ligand>
        <name>L-glutamine</name>
        <dbReference type="ChEBI" id="CHEBI:58359"/>
    </ligand>
</feature>
<feature type="binding site" evidence="2 5">
    <location>
        <begin position="392"/>
        <end position="395"/>
    </location>
    <ligand>
        <name>L-glutamine</name>
        <dbReference type="ChEBI" id="CHEBI:58359"/>
    </ligand>
</feature>
<feature type="binding site" evidence="2 5">
    <location>
        <position position="415"/>
    </location>
    <ligand>
        <name>L-glutamine</name>
        <dbReference type="ChEBI" id="CHEBI:58359"/>
    </ligand>
</feature>
<feature type="binding site" evidence="2 5">
    <location>
        <position position="472"/>
    </location>
    <ligand>
        <name>L-glutamine</name>
        <dbReference type="ChEBI" id="CHEBI:58359"/>
    </ligand>
</feature>
<feature type="strand" evidence="8">
    <location>
        <begin position="13"/>
        <end position="19"/>
    </location>
</feature>
<feature type="strand" evidence="8">
    <location>
        <begin position="21"/>
        <end position="23"/>
    </location>
</feature>
<feature type="helix" evidence="8">
    <location>
        <begin position="27"/>
        <end position="39"/>
    </location>
</feature>
<feature type="turn" evidence="8">
    <location>
        <begin position="40"/>
        <end position="42"/>
    </location>
</feature>
<feature type="strand" evidence="8">
    <location>
        <begin position="45"/>
        <end position="51"/>
    </location>
</feature>
<feature type="helix" evidence="8">
    <location>
        <begin position="58"/>
        <end position="60"/>
    </location>
</feature>
<feature type="helix" evidence="8">
    <location>
        <begin position="81"/>
        <end position="89"/>
    </location>
</feature>
<feature type="helix" evidence="8">
    <location>
        <begin position="95"/>
        <end position="97"/>
    </location>
</feature>
<feature type="strand" evidence="8">
    <location>
        <begin position="98"/>
        <end position="100"/>
    </location>
</feature>
<feature type="helix" evidence="8">
    <location>
        <begin position="101"/>
        <end position="113"/>
    </location>
</feature>
<feature type="turn" evidence="8">
    <location>
        <begin position="114"/>
        <end position="119"/>
    </location>
</feature>
<feature type="turn" evidence="8">
    <location>
        <begin position="124"/>
        <end position="126"/>
    </location>
</feature>
<feature type="helix" evidence="8">
    <location>
        <begin position="127"/>
        <end position="142"/>
    </location>
</feature>
<feature type="strand" evidence="8">
    <location>
        <begin position="146"/>
        <end position="152"/>
    </location>
</feature>
<feature type="helix" evidence="7">
    <location>
        <begin position="159"/>
        <end position="161"/>
    </location>
</feature>
<feature type="helix" evidence="8">
    <location>
        <begin position="162"/>
        <end position="169"/>
    </location>
</feature>
<feature type="helix" evidence="8">
    <location>
        <begin position="171"/>
        <end position="175"/>
    </location>
</feature>
<feature type="strand" evidence="8">
    <location>
        <begin position="179"/>
        <end position="187"/>
    </location>
</feature>
<feature type="turn" evidence="8">
    <location>
        <begin position="192"/>
        <end position="195"/>
    </location>
</feature>
<feature type="helix" evidence="8">
    <location>
        <begin position="200"/>
        <end position="211"/>
    </location>
</feature>
<feature type="strand" evidence="8">
    <location>
        <begin position="217"/>
        <end position="225"/>
    </location>
</feature>
<feature type="helix" evidence="8">
    <location>
        <begin position="229"/>
        <end position="239"/>
    </location>
</feature>
<feature type="helix" evidence="8">
    <location>
        <begin position="243"/>
        <end position="245"/>
    </location>
</feature>
<feature type="strand" evidence="8">
    <location>
        <begin position="246"/>
        <end position="250"/>
    </location>
</feature>
<feature type="helix" evidence="8">
    <location>
        <begin position="257"/>
        <end position="265"/>
    </location>
</feature>
<feature type="helix" evidence="8">
    <location>
        <begin position="267"/>
        <end position="274"/>
    </location>
</feature>
<feature type="helix" evidence="8">
    <location>
        <begin position="285"/>
        <end position="295"/>
    </location>
</feature>
<feature type="strand" evidence="8">
    <location>
        <begin position="298"/>
        <end position="308"/>
    </location>
</feature>
<feature type="helix" evidence="7">
    <location>
        <begin position="314"/>
        <end position="316"/>
    </location>
</feature>
<feature type="helix" evidence="8">
    <location>
        <begin position="317"/>
        <end position="329"/>
    </location>
</feature>
<feature type="strand" evidence="8">
    <location>
        <begin position="332"/>
        <end position="340"/>
    </location>
</feature>
<feature type="helix" evidence="8">
    <location>
        <begin position="341"/>
        <end position="343"/>
    </location>
</feature>
<feature type="helix" evidence="8">
    <location>
        <begin position="349"/>
        <end position="352"/>
    </location>
</feature>
<feature type="turn" evidence="8">
    <location>
        <begin position="353"/>
        <end position="355"/>
    </location>
</feature>
<feature type="strand" evidence="8">
    <location>
        <begin position="359"/>
        <end position="361"/>
    </location>
</feature>
<feature type="helix" evidence="8">
    <location>
        <begin position="370"/>
        <end position="382"/>
    </location>
</feature>
<feature type="strand" evidence="8">
    <location>
        <begin position="387"/>
        <end position="390"/>
    </location>
</feature>
<feature type="helix" evidence="8">
    <location>
        <begin position="392"/>
        <end position="404"/>
    </location>
</feature>
<feature type="turn" evidence="8">
    <location>
        <begin position="414"/>
        <end position="416"/>
    </location>
</feature>
<feature type="strand" evidence="8">
    <location>
        <begin position="423"/>
        <end position="428"/>
    </location>
</feature>
<feature type="helix" evidence="8">
    <location>
        <begin position="430"/>
        <end position="432"/>
    </location>
</feature>
<feature type="strand" evidence="8">
    <location>
        <begin position="442"/>
        <end position="450"/>
    </location>
</feature>
<feature type="helix" evidence="8">
    <location>
        <begin position="455"/>
        <end position="460"/>
    </location>
</feature>
<feature type="strand" evidence="8">
    <location>
        <begin position="463"/>
        <end position="475"/>
    </location>
</feature>
<feature type="helix" evidence="8">
    <location>
        <begin position="477"/>
        <end position="486"/>
    </location>
</feature>
<feature type="strand" evidence="8">
    <location>
        <begin position="488"/>
        <end position="493"/>
    </location>
</feature>
<feature type="strand" evidence="6">
    <location>
        <begin position="497"/>
        <end position="501"/>
    </location>
</feature>
<feature type="strand" evidence="8">
    <location>
        <begin position="505"/>
        <end position="510"/>
    </location>
</feature>
<feature type="strand" evidence="8">
    <location>
        <begin position="513"/>
        <end position="521"/>
    </location>
</feature>
<feature type="helix" evidence="8">
    <location>
        <begin position="523"/>
        <end position="526"/>
    </location>
</feature>
<feature type="strand" evidence="6">
    <location>
        <begin position="529"/>
        <end position="531"/>
    </location>
</feature>
<feature type="helix" evidence="8">
    <location>
        <begin position="534"/>
        <end position="546"/>
    </location>
</feature>